<organism>
    <name type="scientific">Aliarcobacter butzleri (strain RM4018)</name>
    <name type="common">Arcobacter butzleri</name>
    <dbReference type="NCBI Taxonomy" id="367737"/>
    <lineage>
        <taxon>Bacteria</taxon>
        <taxon>Pseudomonadati</taxon>
        <taxon>Campylobacterota</taxon>
        <taxon>Epsilonproteobacteria</taxon>
        <taxon>Campylobacterales</taxon>
        <taxon>Arcobacteraceae</taxon>
        <taxon>Aliarcobacter</taxon>
    </lineage>
</organism>
<accession>A8ERT9</accession>
<keyword id="KW-0030">Aminoacyl-tRNA synthetase</keyword>
<keyword id="KW-0067">ATP-binding</keyword>
<keyword id="KW-0963">Cytoplasm</keyword>
<keyword id="KW-0436">Ligase</keyword>
<keyword id="KW-0547">Nucleotide-binding</keyword>
<keyword id="KW-0648">Protein biosynthesis</keyword>
<keyword id="KW-1185">Reference proteome</keyword>
<dbReference type="EC" id="6.1.1.15" evidence="1"/>
<dbReference type="EMBL" id="CP000361">
    <property type="protein sequence ID" value="ABV66663.1"/>
    <property type="molecule type" value="Genomic_DNA"/>
</dbReference>
<dbReference type="RefSeq" id="WP_012012217.1">
    <property type="nucleotide sequence ID" value="NC_009850.1"/>
</dbReference>
<dbReference type="SMR" id="A8ERT9"/>
<dbReference type="STRING" id="367737.Abu_0388"/>
<dbReference type="GeneID" id="24304528"/>
<dbReference type="KEGG" id="abu:Abu_0388"/>
<dbReference type="eggNOG" id="COG0442">
    <property type="taxonomic scope" value="Bacteria"/>
</dbReference>
<dbReference type="HOGENOM" id="CLU_016739_0_0_7"/>
<dbReference type="Proteomes" id="UP000001136">
    <property type="component" value="Chromosome"/>
</dbReference>
<dbReference type="GO" id="GO:0005829">
    <property type="term" value="C:cytosol"/>
    <property type="evidence" value="ECO:0007669"/>
    <property type="project" value="TreeGrafter"/>
</dbReference>
<dbReference type="GO" id="GO:0002161">
    <property type="term" value="F:aminoacyl-tRNA deacylase activity"/>
    <property type="evidence" value="ECO:0007669"/>
    <property type="project" value="InterPro"/>
</dbReference>
<dbReference type="GO" id="GO:0005524">
    <property type="term" value="F:ATP binding"/>
    <property type="evidence" value="ECO:0007669"/>
    <property type="project" value="UniProtKB-UniRule"/>
</dbReference>
<dbReference type="GO" id="GO:0004827">
    <property type="term" value="F:proline-tRNA ligase activity"/>
    <property type="evidence" value="ECO:0007669"/>
    <property type="project" value="UniProtKB-UniRule"/>
</dbReference>
<dbReference type="GO" id="GO:0006433">
    <property type="term" value="P:prolyl-tRNA aminoacylation"/>
    <property type="evidence" value="ECO:0007669"/>
    <property type="project" value="UniProtKB-UniRule"/>
</dbReference>
<dbReference type="CDD" id="cd04334">
    <property type="entry name" value="ProRS-INS"/>
    <property type="match status" value="1"/>
</dbReference>
<dbReference type="CDD" id="cd00861">
    <property type="entry name" value="ProRS_anticodon_short"/>
    <property type="match status" value="1"/>
</dbReference>
<dbReference type="CDD" id="cd00779">
    <property type="entry name" value="ProRS_core_prok"/>
    <property type="match status" value="1"/>
</dbReference>
<dbReference type="FunFam" id="3.30.930.10:FF:000065">
    <property type="entry name" value="Proline--tRNA ligase"/>
    <property type="match status" value="1"/>
</dbReference>
<dbReference type="FunFam" id="3.30.930.10:FF:000066">
    <property type="entry name" value="Proline--tRNA ligase"/>
    <property type="match status" value="1"/>
</dbReference>
<dbReference type="Gene3D" id="3.40.50.800">
    <property type="entry name" value="Anticodon-binding domain"/>
    <property type="match status" value="1"/>
</dbReference>
<dbReference type="Gene3D" id="3.30.930.10">
    <property type="entry name" value="Bira Bifunctional Protein, Domain 2"/>
    <property type="match status" value="2"/>
</dbReference>
<dbReference type="HAMAP" id="MF_01569">
    <property type="entry name" value="Pro_tRNA_synth_type1"/>
    <property type="match status" value="1"/>
</dbReference>
<dbReference type="InterPro" id="IPR002314">
    <property type="entry name" value="aa-tRNA-synt_IIb"/>
</dbReference>
<dbReference type="InterPro" id="IPR006195">
    <property type="entry name" value="aa-tRNA-synth_II"/>
</dbReference>
<dbReference type="InterPro" id="IPR045864">
    <property type="entry name" value="aa-tRNA-synth_II/BPL/LPL"/>
</dbReference>
<dbReference type="InterPro" id="IPR004154">
    <property type="entry name" value="Anticodon-bd"/>
</dbReference>
<dbReference type="InterPro" id="IPR036621">
    <property type="entry name" value="Anticodon-bd_dom_sf"/>
</dbReference>
<dbReference type="InterPro" id="IPR002316">
    <property type="entry name" value="Pro-tRNA-ligase_IIa"/>
</dbReference>
<dbReference type="InterPro" id="IPR004500">
    <property type="entry name" value="Pro-tRNA-synth_IIa_bac-type"/>
</dbReference>
<dbReference type="InterPro" id="IPR023717">
    <property type="entry name" value="Pro-tRNA-Synthase_IIa_type1"/>
</dbReference>
<dbReference type="InterPro" id="IPR050062">
    <property type="entry name" value="Pro-tRNA_synthetase"/>
</dbReference>
<dbReference type="InterPro" id="IPR044140">
    <property type="entry name" value="ProRS_anticodon_short"/>
</dbReference>
<dbReference type="InterPro" id="IPR033730">
    <property type="entry name" value="ProRS_core_prok"/>
</dbReference>
<dbReference type="InterPro" id="IPR036754">
    <property type="entry name" value="YbaK/aa-tRNA-synt-asso_dom_sf"/>
</dbReference>
<dbReference type="InterPro" id="IPR007214">
    <property type="entry name" value="YbaK/aa-tRNA-synth-assoc-dom"/>
</dbReference>
<dbReference type="NCBIfam" id="NF006625">
    <property type="entry name" value="PRK09194.1"/>
    <property type="match status" value="1"/>
</dbReference>
<dbReference type="NCBIfam" id="TIGR00409">
    <property type="entry name" value="proS_fam_II"/>
    <property type="match status" value="1"/>
</dbReference>
<dbReference type="PANTHER" id="PTHR42753">
    <property type="entry name" value="MITOCHONDRIAL RIBOSOME PROTEIN L39/PROLYL-TRNA LIGASE FAMILY MEMBER"/>
    <property type="match status" value="1"/>
</dbReference>
<dbReference type="PANTHER" id="PTHR42753:SF2">
    <property type="entry name" value="PROLINE--TRNA LIGASE"/>
    <property type="match status" value="1"/>
</dbReference>
<dbReference type="Pfam" id="PF03129">
    <property type="entry name" value="HGTP_anticodon"/>
    <property type="match status" value="1"/>
</dbReference>
<dbReference type="Pfam" id="PF00587">
    <property type="entry name" value="tRNA-synt_2b"/>
    <property type="match status" value="1"/>
</dbReference>
<dbReference type="Pfam" id="PF04073">
    <property type="entry name" value="tRNA_edit"/>
    <property type="match status" value="1"/>
</dbReference>
<dbReference type="PRINTS" id="PR01046">
    <property type="entry name" value="TRNASYNTHPRO"/>
</dbReference>
<dbReference type="SUPFAM" id="SSF52954">
    <property type="entry name" value="Class II aaRS ABD-related"/>
    <property type="match status" value="1"/>
</dbReference>
<dbReference type="SUPFAM" id="SSF55681">
    <property type="entry name" value="Class II aaRS and biotin synthetases"/>
    <property type="match status" value="1"/>
</dbReference>
<dbReference type="SUPFAM" id="SSF55826">
    <property type="entry name" value="YbaK/ProRS associated domain"/>
    <property type="match status" value="1"/>
</dbReference>
<dbReference type="PROSITE" id="PS50862">
    <property type="entry name" value="AA_TRNA_LIGASE_II"/>
    <property type="match status" value="1"/>
</dbReference>
<proteinExistence type="inferred from homology"/>
<evidence type="ECO:0000255" key="1">
    <source>
        <dbReference type="HAMAP-Rule" id="MF_01569"/>
    </source>
</evidence>
<protein>
    <recommendedName>
        <fullName evidence="1">Proline--tRNA ligase</fullName>
        <ecNumber evidence="1">6.1.1.15</ecNumber>
    </recommendedName>
    <alternativeName>
        <fullName evidence="1">Prolyl-tRNA synthetase</fullName>
        <shortName evidence="1">ProRS</shortName>
    </alternativeName>
</protein>
<gene>
    <name evidence="1" type="primary">proS</name>
    <name type="ordered locus">Abu_0388</name>
</gene>
<comment type="function">
    <text evidence="1">Catalyzes the attachment of proline to tRNA(Pro) in a two-step reaction: proline is first activated by ATP to form Pro-AMP and then transferred to the acceptor end of tRNA(Pro). As ProRS can inadvertently accommodate and process non-cognate amino acids such as alanine and cysteine, to avoid such errors it has two additional distinct editing activities against alanine. One activity is designated as 'pretransfer' editing and involves the tRNA(Pro)-independent hydrolysis of activated Ala-AMP. The other activity is designated 'posttransfer' editing and involves deacylation of mischarged Ala-tRNA(Pro). The misacylated Cys-tRNA(Pro) is not edited by ProRS.</text>
</comment>
<comment type="catalytic activity">
    <reaction evidence="1">
        <text>tRNA(Pro) + L-proline + ATP = L-prolyl-tRNA(Pro) + AMP + diphosphate</text>
        <dbReference type="Rhea" id="RHEA:14305"/>
        <dbReference type="Rhea" id="RHEA-COMP:9700"/>
        <dbReference type="Rhea" id="RHEA-COMP:9702"/>
        <dbReference type="ChEBI" id="CHEBI:30616"/>
        <dbReference type="ChEBI" id="CHEBI:33019"/>
        <dbReference type="ChEBI" id="CHEBI:60039"/>
        <dbReference type="ChEBI" id="CHEBI:78442"/>
        <dbReference type="ChEBI" id="CHEBI:78532"/>
        <dbReference type="ChEBI" id="CHEBI:456215"/>
        <dbReference type="EC" id="6.1.1.15"/>
    </reaction>
</comment>
<comment type="subunit">
    <text evidence="1">Homodimer.</text>
</comment>
<comment type="subcellular location">
    <subcellularLocation>
        <location evidence="1">Cytoplasm</location>
    </subcellularLocation>
</comment>
<comment type="domain">
    <text evidence="1">Consists of three domains: the N-terminal catalytic domain, the editing domain and the C-terminal anticodon-binding domain.</text>
</comment>
<comment type="similarity">
    <text evidence="1">Belongs to the class-II aminoacyl-tRNA synthetase family. ProS type 1 subfamily.</text>
</comment>
<name>SYP_ALIB4</name>
<reference key="1">
    <citation type="journal article" date="2007" name="PLoS ONE">
        <title>The complete genome sequence and analysis of the Epsilonproteobacterium Arcobacter butzleri.</title>
        <authorList>
            <person name="Miller W.G."/>
            <person name="Parker C.T."/>
            <person name="Rubenfield M."/>
            <person name="Mendz G.L."/>
            <person name="Woesten M.M.S.M."/>
            <person name="Ussery D.W."/>
            <person name="Stolz J.F."/>
            <person name="Binnewies T.T."/>
            <person name="Hallin P.F."/>
            <person name="Wang G."/>
            <person name="Malek J.A."/>
            <person name="Rogosin A."/>
            <person name="Stanker L.H."/>
            <person name="Mandrell R.E."/>
        </authorList>
    </citation>
    <scope>NUCLEOTIDE SEQUENCE [LARGE SCALE GENOMIC DNA]</scope>
    <source>
        <strain>RM4018</strain>
    </source>
</reference>
<sequence>MKFSKMFIPTTKETPNDATLPSHQYLVRGGFIAQTGAGIYDFMPLGKIVLEKIRAIVKEEMDEAGANEVQFGFVTPLTLWQESGRATTMGAEMLRFKDRKNGEFVLSPTNEEAVVNMVKNRITSYKDLPLHLYQINTKFRDEARPRFGLMRGREFLMKDGYSFHSSEEDLVREFNLMETTYKKIYTKLGLDFRVVAADSGAIGGSGSKEFHVIADSGEDTLVVCDSCDYGANIEAAIRKPKTYSFERKSDSKKIHTPNTKTIEEVANFLNISKEQTIKAVIKKAIYEEKTQIVIFFVRGSDELEETKACNAVNALELIDASEDDIKEAGLVAGYCGLFNLPSNINFIIDLELKDEIGLACGANEEDYHLVNTDLSTLKDVKYYDLIAVQEGDICACCGGKLSYTKGIEAGHIFQLGTKYSSAMNANFLDENGKAKPFIMGCYGIGVSRLVAAVIEQNHDDKGCIWTKATAPFMVDIIVSNSKKEEEAKVGEELYSKLKQAGISTILDDRINARFGFKMSDFELLGFPYAVVIGKKLEDGLVEIVDRKTLEKIDVKVDEVISKILELVK</sequence>
<feature type="chain" id="PRO_1000069119" description="Proline--tRNA ligase">
    <location>
        <begin position="1"/>
        <end position="568"/>
    </location>
</feature>